<feature type="chain" id="PRO_0000184177" description="Transcriptional activator protein RaiR">
    <location>
        <begin position="1"/>
        <end position="242"/>
    </location>
</feature>
<feature type="domain" description="HTH luxR-type" evidence="1">
    <location>
        <begin position="177"/>
        <end position="242"/>
    </location>
</feature>
<feature type="DNA-binding region" description="H-T-H motif" evidence="1">
    <location>
        <begin position="201"/>
        <end position="220"/>
    </location>
</feature>
<evidence type="ECO:0000255" key="1">
    <source>
        <dbReference type="PROSITE-ProRule" id="PRU00411"/>
    </source>
</evidence>
<evidence type="ECO:0000305" key="2"/>
<organism>
    <name type="scientific">Rhizobium etli</name>
    <dbReference type="NCBI Taxonomy" id="29449"/>
    <lineage>
        <taxon>Bacteria</taxon>
        <taxon>Pseudomonadati</taxon>
        <taxon>Pseudomonadota</taxon>
        <taxon>Alphaproteobacteria</taxon>
        <taxon>Hyphomicrobiales</taxon>
        <taxon>Rhizobiaceae</taxon>
        <taxon>Rhizobium/Agrobacterium group</taxon>
        <taxon>Rhizobium</taxon>
    </lineage>
</organism>
<protein>
    <recommendedName>
        <fullName>Transcriptional activator protein RaiR</fullName>
    </recommendedName>
</protein>
<sequence>MSPSHAEQFSFFLLSGPDLRIADIAGSGNDAGRSRPHLCDIAYGSPCDLAGATDSNPLLMLTYPPEWVKQYRDRDYFSIDPVVRLGRRGFLPVEWSASGWDSGRAYGFFKEAMAFGVGRQGVTLPVRGPQGERSLFTVTSNHPDAYWRQFRMDSMRDLQFLAHHLHDRAMVLSGMRKVADLPRLSRRELQCLEMTANGLLAKQICARLSISVSAVQLYLASARRKLTVATTSEQLLGPRRSN</sequence>
<dbReference type="EMBL" id="AY708656">
    <property type="protein sequence ID" value="AAC38173.1"/>
    <property type="molecule type" value="Genomic_DNA"/>
</dbReference>
<dbReference type="SMR" id="O54452"/>
<dbReference type="GO" id="GO:0003677">
    <property type="term" value="F:DNA binding"/>
    <property type="evidence" value="ECO:0007669"/>
    <property type="project" value="UniProtKB-KW"/>
</dbReference>
<dbReference type="GO" id="GO:0009372">
    <property type="term" value="P:quorum sensing"/>
    <property type="evidence" value="ECO:0007669"/>
    <property type="project" value="UniProtKB-KW"/>
</dbReference>
<dbReference type="GO" id="GO:0006355">
    <property type="term" value="P:regulation of DNA-templated transcription"/>
    <property type="evidence" value="ECO:0007669"/>
    <property type="project" value="InterPro"/>
</dbReference>
<dbReference type="CDD" id="cd06170">
    <property type="entry name" value="LuxR_C_like"/>
    <property type="match status" value="1"/>
</dbReference>
<dbReference type="Gene3D" id="3.30.450.80">
    <property type="entry name" value="Transcription factor LuxR-like, autoinducer-binding domain"/>
    <property type="match status" value="1"/>
</dbReference>
<dbReference type="Gene3D" id="1.10.10.10">
    <property type="entry name" value="Winged helix-like DNA-binding domain superfamily/Winged helix DNA-binding domain"/>
    <property type="match status" value="1"/>
</dbReference>
<dbReference type="InterPro" id="IPR016032">
    <property type="entry name" value="Sig_transdc_resp-reg_C-effctor"/>
</dbReference>
<dbReference type="InterPro" id="IPR005143">
    <property type="entry name" value="TF_LuxR_autoind-bd_dom"/>
</dbReference>
<dbReference type="InterPro" id="IPR036693">
    <property type="entry name" value="TF_LuxR_autoind-bd_dom_sf"/>
</dbReference>
<dbReference type="InterPro" id="IPR000792">
    <property type="entry name" value="Tscrpt_reg_LuxR_C"/>
</dbReference>
<dbReference type="InterPro" id="IPR036388">
    <property type="entry name" value="WH-like_DNA-bd_sf"/>
</dbReference>
<dbReference type="PANTHER" id="PTHR44688">
    <property type="entry name" value="DNA-BINDING TRANSCRIPTIONAL ACTIVATOR DEVR_DOSR"/>
    <property type="match status" value="1"/>
</dbReference>
<dbReference type="PANTHER" id="PTHR44688:SF16">
    <property type="entry name" value="DNA-BINDING TRANSCRIPTIONAL ACTIVATOR DEVR_DOSR"/>
    <property type="match status" value="1"/>
</dbReference>
<dbReference type="Pfam" id="PF03472">
    <property type="entry name" value="Autoind_bind"/>
    <property type="match status" value="1"/>
</dbReference>
<dbReference type="Pfam" id="PF00196">
    <property type="entry name" value="GerE"/>
    <property type="match status" value="1"/>
</dbReference>
<dbReference type="PRINTS" id="PR00038">
    <property type="entry name" value="HTHLUXR"/>
</dbReference>
<dbReference type="SMART" id="SM00421">
    <property type="entry name" value="HTH_LUXR"/>
    <property type="match status" value="1"/>
</dbReference>
<dbReference type="SUPFAM" id="SSF46894">
    <property type="entry name" value="C-terminal effector domain of the bipartite response regulators"/>
    <property type="match status" value="1"/>
</dbReference>
<dbReference type="SUPFAM" id="SSF75516">
    <property type="entry name" value="Pheromone-binding domain of LuxR-like quorum-sensing transcription factors"/>
    <property type="match status" value="1"/>
</dbReference>
<dbReference type="PROSITE" id="PS50043">
    <property type="entry name" value="HTH_LUXR_2"/>
    <property type="match status" value="1"/>
</dbReference>
<comment type="similarity">
    <text evidence="2">Belongs to the autoinducer-regulated transcriptional regulatory protein family.</text>
</comment>
<keyword id="KW-0010">Activator</keyword>
<keyword id="KW-0238">DNA-binding</keyword>
<keyword id="KW-0673">Quorum sensing</keyword>
<keyword id="KW-0804">Transcription</keyword>
<keyword id="KW-0805">Transcription regulation</keyword>
<gene>
    <name type="primary">raiR</name>
</gene>
<accession>O54452</accession>
<reference key="1">
    <citation type="journal article" date="1998" name="J. Bacteriol.">
        <title>luxI- and luxR-homologous genes of Rhizobium etli CNPAF512 contribute to synthesis of autoinducer molecules and nodulation of Phaseolus vulgaris.</title>
        <authorList>
            <person name="Rosemeyer V."/>
            <person name="Michiels J."/>
            <person name="Verreth C."/>
            <person name="Vanderleyden J."/>
        </authorList>
    </citation>
    <scope>NUCLEOTIDE SEQUENCE [GENOMIC DNA]</scope>
    <source>
        <strain>CNPAF512</strain>
    </source>
</reference>
<name>RAIR_RHIET</name>
<proteinExistence type="inferred from homology"/>